<organism>
    <name type="scientific">Leontopithecus chrysomelas</name>
    <name type="common">Golden-headed lion tamarin</name>
    <dbReference type="NCBI Taxonomy" id="57374"/>
    <lineage>
        <taxon>Eukaryota</taxon>
        <taxon>Metazoa</taxon>
        <taxon>Chordata</taxon>
        <taxon>Craniata</taxon>
        <taxon>Vertebrata</taxon>
        <taxon>Euteleostomi</taxon>
        <taxon>Mammalia</taxon>
        <taxon>Eutheria</taxon>
        <taxon>Euarchontoglires</taxon>
        <taxon>Primates</taxon>
        <taxon>Haplorrhini</taxon>
        <taxon>Platyrrhini</taxon>
        <taxon>Cebidae</taxon>
        <taxon>Callitrichinae</taxon>
        <taxon>Leontopithecus</taxon>
    </lineage>
</organism>
<feature type="signal peptide" evidence="4">
    <location>
        <begin position="1"/>
        <end position="22"/>
    </location>
</feature>
<feature type="chain" id="PRO_0000285054" description="Agouti-signaling protein">
    <location>
        <begin position="23"/>
        <end position="132"/>
    </location>
</feature>
<feature type="domain" description="Agouti" evidence="5">
    <location>
        <begin position="93"/>
        <end position="132"/>
    </location>
</feature>
<feature type="region of interest" description="Disordered" evidence="6">
    <location>
        <begin position="62"/>
        <end position="93"/>
    </location>
</feature>
<feature type="compositionally biased region" description="Basic and acidic residues" evidence="6">
    <location>
        <begin position="64"/>
        <end position="79"/>
    </location>
</feature>
<feature type="glycosylation site" description="N-linked (GlcNAc...) asparagine" evidence="4">
    <location>
        <position position="39"/>
    </location>
</feature>
<feature type="disulfide bond" evidence="5">
    <location>
        <begin position="93"/>
        <end position="108"/>
    </location>
</feature>
<feature type="disulfide bond" evidence="5">
    <location>
        <begin position="100"/>
        <end position="114"/>
    </location>
</feature>
<feature type="disulfide bond" evidence="5">
    <location>
        <begin position="107"/>
        <end position="125"/>
    </location>
</feature>
<feature type="disulfide bond" evidence="5">
    <location>
        <begin position="111"/>
        <end position="132"/>
    </location>
</feature>
<feature type="disulfide bond" evidence="5">
    <location>
        <begin position="116"/>
        <end position="123"/>
    </location>
</feature>
<name>ASIP_LEOCY</name>
<reference key="1">
    <citation type="journal article" date="2006" name="Mamm. Genome">
        <title>Investigation of the role of the agouti signaling protein gene (ASIP) in coat color evolution in primates.</title>
        <authorList>
            <person name="Mundy N.I."/>
            <person name="Kelly J."/>
        </authorList>
    </citation>
    <scope>NUCLEOTIDE SEQUENCE [GENOMIC DNA]</scope>
</reference>
<proteinExistence type="inferred from homology"/>
<gene>
    <name type="primary">ASIP</name>
</gene>
<comment type="function">
    <text evidence="3">Involved in the regulation of melanogenesis. The binding of ASP to MC1R precludes alpha-MSH initiated signaling and thus blocks production of cAMP, leading to a down-regulation of eumelanogenesis (brown/black pigment) and thus increasing synthesis of pheomelanin (yellow/red pigment) (By similarity).</text>
</comment>
<comment type="subcellular location">
    <subcellularLocation>
        <location evidence="2">Secreted</location>
    </subcellularLocation>
</comment>
<comment type="domain">
    <text evidence="1">The presence of a 'disulfide through disulfide knot' structurally defines this protein as a knottin.</text>
</comment>
<accession>A1YL81</accession>
<sequence>MDVTXLLLATLLVFLCCFAAYSHLPPEEKLRDDRSLRSNSSVNLLDLPSVSIVALNKKSKKISRKEAENKRSSKKEASKQKVARPRTPLSVPCVSTRGSCKPPAPACCHPCASCQCRFFRSACSCRVINVNC</sequence>
<keyword id="KW-1015">Disulfide bond</keyword>
<keyword id="KW-0325">Glycoprotein</keyword>
<keyword id="KW-0960">Knottin</keyword>
<keyword id="KW-0964">Secreted</keyword>
<keyword id="KW-0732">Signal</keyword>
<evidence type="ECO:0000250" key="1"/>
<evidence type="ECO:0000250" key="2">
    <source>
        <dbReference type="UniProtKB" id="P42127"/>
    </source>
</evidence>
<evidence type="ECO:0000250" key="3">
    <source>
        <dbReference type="UniProtKB" id="Q03288"/>
    </source>
</evidence>
<evidence type="ECO:0000255" key="4"/>
<evidence type="ECO:0000255" key="5">
    <source>
        <dbReference type="PROSITE-ProRule" id="PRU00494"/>
    </source>
</evidence>
<evidence type="ECO:0000256" key="6">
    <source>
        <dbReference type="SAM" id="MobiDB-lite"/>
    </source>
</evidence>
<dbReference type="EMBL" id="EF094498">
    <property type="protein sequence ID" value="ABL84296.1"/>
    <property type="molecule type" value="Genomic_DNA"/>
</dbReference>
<dbReference type="GlyCosmos" id="A1YL81">
    <property type="glycosylation" value="1 site, No reported glycans"/>
</dbReference>
<dbReference type="GO" id="GO:0005615">
    <property type="term" value="C:extracellular space"/>
    <property type="evidence" value="ECO:0000250"/>
    <property type="project" value="UniProtKB"/>
</dbReference>
<dbReference type="GO" id="GO:0031779">
    <property type="term" value="F:melanocortin receptor binding"/>
    <property type="evidence" value="ECO:0007669"/>
    <property type="project" value="TreeGrafter"/>
</dbReference>
<dbReference type="GO" id="GO:0005184">
    <property type="term" value="F:neuropeptide hormone activity"/>
    <property type="evidence" value="ECO:0007669"/>
    <property type="project" value="TreeGrafter"/>
</dbReference>
<dbReference type="GO" id="GO:0009755">
    <property type="term" value="P:hormone-mediated signaling pathway"/>
    <property type="evidence" value="ECO:0007669"/>
    <property type="project" value="InterPro"/>
</dbReference>
<dbReference type="GO" id="GO:0042438">
    <property type="term" value="P:melanin biosynthetic process"/>
    <property type="evidence" value="ECO:0000250"/>
    <property type="project" value="UniProtKB"/>
</dbReference>
<dbReference type="GO" id="GO:0032438">
    <property type="term" value="P:melanosome organization"/>
    <property type="evidence" value="ECO:0007669"/>
    <property type="project" value="TreeGrafter"/>
</dbReference>
<dbReference type="FunFam" id="4.10.760.10:FF:000002">
    <property type="entry name" value="Agouti-signaling protein"/>
    <property type="match status" value="1"/>
</dbReference>
<dbReference type="Gene3D" id="4.10.760.10">
    <property type="entry name" value="Agouti domain"/>
    <property type="match status" value="1"/>
</dbReference>
<dbReference type="InterPro" id="IPR007733">
    <property type="entry name" value="Agouti"/>
</dbReference>
<dbReference type="InterPro" id="IPR027300">
    <property type="entry name" value="Agouti_dom"/>
</dbReference>
<dbReference type="InterPro" id="IPR036836">
    <property type="entry name" value="Agouti_dom_sf"/>
</dbReference>
<dbReference type="PANTHER" id="PTHR16551">
    <property type="entry name" value="AGOUTI RELATED"/>
    <property type="match status" value="1"/>
</dbReference>
<dbReference type="PANTHER" id="PTHR16551:SF1">
    <property type="entry name" value="AGOUTI-SIGNALING PROTEIN"/>
    <property type="match status" value="1"/>
</dbReference>
<dbReference type="Pfam" id="PF05039">
    <property type="entry name" value="Agouti"/>
    <property type="match status" value="1"/>
</dbReference>
<dbReference type="SMART" id="SM00792">
    <property type="entry name" value="Agouti"/>
    <property type="match status" value="1"/>
</dbReference>
<dbReference type="SUPFAM" id="SSF57055">
    <property type="entry name" value="Agouti-related protein"/>
    <property type="match status" value="1"/>
</dbReference>
<dbReference type="PROSITE" id="PS60024">
    <property type="entry name" value="AGOUTI_1"/>
    <property type="match status" value="1"/>
</dbReference>
<dbReference type="PROSITE" id="PS51150">
    <property type="entry name" value="AGOUTI_2"/>
    <property type="match status" value="1"/>
</dbReference>
<protein>
    <recommendedName>
        <fullName>Agouti-signaling protein</fullName>
        <shortName>ASP</shortName>
    </recommendedName>
    <alternativeName>
        <fullName>Agouti switch protein</fullName>
    </alternativeName>
</protein>